<organism>
    <name type="scientific">Levilactobacillus brevis (strain ATCC 367 / BCRC 12310 / CIP 105137 / JCM 1170 / LMG 11437 / NCIMB 947 / NCTC 947)</name>
    <name type="common">Lactobacillus brevis</name>
    <dbReference type="NCBI Taxonomy" id="387344"/>
    <lineage>
        <taxon>Bacteria</taxon>
        <taxon>Bacillati</taxon>
        <taxon>Bacillota</taxon>
        <taxon>Bacilli</taxon>
        <taxon>Lactobacillales</taxon>
        <taxon>Lactobacillaceae</taxon>
        <taxon>Levilactobacillus</taxon>
    </lineage>
</organism>
<protein>
    <recommendedName>
        <fullName evidence="1">NH(3)-dependent NAD(+) synthetase</fullName>
        <ecNumber evidence="1">6.3.1.5</ecNumber>
    </recommendedName>
</protein>
<evidence type="ECO:0000255" key="1">
    <source>
        <dbReference type="HAMAP-Rule" id="MF_00193"/>
    </source>
</evidence>
<accession>Q03SX9</accession>
<keyword id="KW-0067">ATP-binding</keyword>
<keyword id="KW-0436">Ligase</keyword>
<keyword id="KW-0460">Magnesium</keyword>
<keyword id="KW-0479">Metal-binding</keyword>
<keyword id="KW-0520">NAD</keyword>
<keyword id="KW-0547">Nucleotide-binding</keyword>
<keyword id="KW-1185">Reference proteome</keyword>
<proteinExistence type="inferred from homology"/>
<feature type="chain" id="PRO_1000077562" description="NH(3)-dependent NAD(+) synthetase">
    <location>
        <begin position="1"/>
        <end position="276"/>
    </location>
</feature>
<feature type="binding site" evidence="1">
    <location>
        <begin position="47"/>
        <end position="54"/>
    </location>
    <ligand>
        <name>ATP</name>
        <dbReference type="ChEBI" id="CHEBI:30616"/>
    </ligand>
</feature>
<feature type="binding site" evidence="1">
    <location>
        <position position="53"/>
    </location>
    <ligand>
        <name>Mg(2+)</name>
        <dbReference type="ChEBI" id="CHEBI:18420"/>
    </ligand>
</feature>
<feature type="binding site" evidence="1">
    <location>
        <position position="141"/>
    </location>
    <ligand>
        <name>deamido-NAD(+)</name>
        <dbReference type="ChEBI" id="CHEBI:58437"/>
    </ligand>
</feature>
<feature type="binding site" evidence="1">
    <location>
        <position position="161"/>
    </location>
    <ligand>
        <name>ATP</name>
        <dbReference type="ChEBI" id="CHEBI:30616"/>
    </ligand>
</feature>
<feature type="binding site" evidence="1">
    <location>
        <position position="166"/>
    </location>
    <ligand>
        <name>Mg(2+)</name>
        <dbReference type="ChEBI" id="CHEBI:18420"/>
    </ligand>
</feature>
<feature type="binding site" evidence="1">
    <location>
        <position position="174"/>
    </location>
    <ligand>
        <name>deamido-NAD(+)</name>
        <dbReference type="ChEBI" id="CHEBI:58437"/>
    </ligand>
</feature>
<feature type="binding site" evidence="1">
    <location>
        <position position="181"/>
    </location>
    <ligand>
        <name>deamido-NAD(+)</name>
        <dbReference type="ChEBI" id="CHEBI:58437"/>
    </ligand>
</feature>
<feature type="binding site" evidence="1">
    <location>
        <position position="190"/>
    </location>
    <ligand>
        <name>ATP</name>
        <dbReference type="ChEBI" id="CHEBI:30616"/>
    </ligand>
</feature>
<feature type="binding site" evidence="1">
    <location>
        <position position="212"/>
    </location>
    <ligand>
        <name>ATP</name>
        <dbReference type="ChEBI" id="CHEBI:30616"/>
    </ligand>
</feature>
<feature type="binding site" evidence="1">
    <location>
        <begin position="261"/>
        <end position="262"/>
    </location>
    <ligand>
        <name>deamido-NAD(+)</name>
        <dbReference type="ChEBI" id="CHEBI:58437"/>
    </ligand>
</feature>
<reference key="1">
    <citation type="journal article" date="2006" name="Proc. Natl. Acad. Sci. U.S.A.">
        <title>Comparative genomics of the lactic acid bacteria.</title>
        <authorList>
            <person name="Makarova K.S."/>
            <person name="Slesarev A."/>
            <person name="Wolf Y.I."/>
            <person name="Sorokin A."/>
            <person name="Mirkin B."/>
            <person name="Koonin E.V."/>
            <person name="Pavlov A."/>
            <person name="Pavlova N."/>
            <person name="Karamychev V."/>
            <person name="Polouchine N."/>
            <person name="Shakhova V."/>
            <person name="Grigoriev I."/>
            <person name="Lou Y."/>
            <person name="Rohksar D."/>
            <person name="Lucas S."/>
            <person name="Huang K."/>
            <person name="Goodstein D.M."/>
            <person name="Hawkins T."/>
            <person name="Plengvidhya V."/>
            <person name="Welker D."/>
            <person name="Hughes J."/>
            <person name="Goh Y."/>
            <person name="Benson A."/>
            <person name="Baldwin K."/>
            <person name="Lee J.-H."/>
            <person name="Diaz-Muniz I."/>
            <person name="Dosti B."/>
            <person name="Smeianov V."/>
            <person name="Wechter W."/>
            <person name="Barabote R."/>
            <person name="Lorca G."/>
            <person name="Altermann E."/>
            <person name="Barrangou R."/>
            <person name="Ganesan B."/>
            <person name="Xie Y."/>
            <person name="Rawsthorne H."/>
            <person name="Tamir D."/>
            <person name="Parker C."/>
            <person name="Breidt F."/>
            <person name="Broadbent J.R."/>
            <person name="Hutkins R."/>
            <person name="O'Sullivan D."/>
            <person name="Steele J."/>
            <person name="Unlu G."/>
            <person name="Saier M.H. Jr."/>
            <person name="Klaenhammer T."/>
            <person name="Richardson P."/>
            <person name="Kozyavkin S."/>
            <person name="Weimer B.C."/>
            <person name="Mills D.A."/>
        </authorList>
    </citation>
    <scope>NUCLEOTIDE SEQUENCE [LARGE SCALE GENOMIC DNA]</scope>
    <source>
        <strain>ATCC 367 / BCRC 12310 / CIP 105137 / JCM 1170 / LMG 11437 / NCIMB 947 / NCTC 947</strain>
    </source>
</reference>
<name>NADE_LEVBA</name>
<comment type="function">
    <text evidence="1">Catalyzes the ATP-dependent amidation of deamido-NAD to form NAD. Uses ammonia as a nitrogen source.</text>
</comment>
<comment type="catalytic activity">
    <reaction evidence="1">
        <text>deamido-NAD(+) + NH4(+) + ATP = AMP + diphosphate + NAD(+) + H(+)</text>
        <dbReference type="Rhea" id="RHEA:21188"/>
        <dbReference type="ChEBI" id="CHEBI:15378"/>
        <dbReference type="ChEBI" id="CHEBI:28938"/>
        <dbReference type="ChEBI" id="CHEBI:30616"/>
        <dbReference type="ChEBI" id="CHEBI:33019"/>
        <dbReference type="ChEBI" id="CHEBI:57540"/>
        <dbReference type="ChEBI" id="CHEBI:58437"/>
        <dbReference type="ChEBI" id="CHEBI:456215"/>
        <dbReference type="EC" id="6.3.1.5"/>
    </reaction>
</comment>
<comment type="pathway">
    <text evidence="1">Cofactor biosynthesis; NAD(+) biosynthesis; NAD(+) from deamido-NAD(+) (ammonia route): step 1/1.</text>
</comment>
<comment type="subunit">
    <text evidence="1">Homodimer.</text>
</comment>
<comment type="similarity">
    <text evidence="1">Belongs to the NAD synthetase family.</text>
</comment>
<dbReference type="EC" id="6.3.1.5" evidence="1"/>
<dbReference type="EMBL" id="CP000416">
    <property type="protein sequence ID" value="ABJ63693.1"/>
    <property type="molecule type" value="Genomic_DNA"/>
</dbReference>
<dbReference type="RefSeq" id="WP_011667319.1">
    <property type="nucleotide sequence ID" value="NC_008497.1"/>
</dbReference>
<dbReference type="SMR" id="Q03SX9"/>
<dbReference type="STRING" id="387344.LVIS_0544"/>
<dbReference type="KEGG" id="lbr:LVIS_0544"/>
<dbReference type="PATRIC" id="fig|387344.15.peg.524"/>
<dbReference type="eggNOG" id="COG0171">
    <property type="taxonomic scope" value="Bacteria"/>
</dbReference>
<dbReference type="HOGENOM" id="CLU_059327_3_0_9"/>
<dbReference type="UniPathway" id="UPA00253">
    <property type="reaction ID" value="UER00333"/>
</dbReference>
<dbReference type="Proteomes" id="UP000001652">
    <property type="component" value="Chromosome"/>
</dbReference>
<dbReference type="GO" id="GO:0005737">
    <property type="term" value="C:cytoplasm"/>
    <property type="evidence" value="ECO:0007669"/>
    <property type="project" value="InterPro"/>
</dbReference>
<dbReference type="GO" id="GO:0005524">
    <property type="term" value="F:ATP binding"/>
    <property type="evidence" value="ECO:0007669"/>
    <property type="project" value="UniProtKB-UniRule"/>
</dbReference>
<dbReference type="GO" id="GO:0004359">
    <property type="term" value="F:glutaminase activity"/>
    <property type="evidence" value="ECO:0007669"/>
    <property type="project" value="InterPro"/>
</dbReference>
<dbReference type="GO" id="GO:0046872">
    <property type="term" value="F:metal ion binding"/>
    <property type="evidence" value="ECO:0007669"/>
    <property type="project" value="UniProtKB-KW"/>
</dbReference>
<dbReference type="GO" id="GO:0003952">
    <property type="term" value="F:NAD+ synthase (glutamine-hydrolyzing) activity"/>
    <property type="evidence" value="ECO:0007669"/>
    <property type="project" value="InterPro"/>
</dbReference>
<dbReference type="GO" id="GO:0008795">
    <property type="term" value="F:NAD+ synthase activity"/>
    <property type="evidence" value="ECO:0007669"/>
    <property type="project" value="UniProtKB-UniRule"/>
</dbReference>
<dbReference type="GO" id="GO:0009435">
    <property type="term" value="P:NAD biosynthetic process"/>
    <property type="evidence" value="ECO:0007669"/>
    <property type="project" value="UniProtKB-UniRule"/>
</dbReference>
<dbReference type="CDD" id="cd00553">
    <property type="entry name" value="NAD_synthase"/>
    <property type="match status" value="1"/>
</dbReference>
<dbReference type="FunFam" id="3.40.50.620:FF:000015">
    <property type="entry name" value="NH(3)-dependent NAD(+) synthetase"/>
    <property type="match status" value="1"/>
</dbReference>
<dbReference type="Gene3D" id="3.40.50.620">
    <property type="entry name" value="HUPs"/>
    <property type="match status" value="1"/>
</dbReference>
<dbReference type="HAMAP" id="MF_00193">
    <property type="entry name" value="NadE_ammonia_dep"/>
    <property type="match status" value="1"/>
</dbReference>
<dbReference type="InterPro" id="IPR022310">
    <property type="entry name" value="NAD/GMP_synthase"/>
</dbReference>
<dbReference type="InterPro" id="IPR003694">
    <property type="entry name" value="NAD_synthase"/>
</dbReference>
<dbReference type="InterPro" id="IPR022926">
    <property type="entry name" value="NH(3)-dep_NAD(+)_synth"/>
</dbReference>
<dbReference type="InterPro" id="IPR014729">
    <property type="entry name" value="Rossmann-like_a/b/a_fold"/>
</dbReference>
<dbReference type="NCBIfam" id="TIGR00552">
    <property type="entry name" value="nadE"/>
    <property type="match status" value="1"/>
</dbReference>
<dbReference type="NCBIfam" id="NF001979">
    <property type="entry name" value="PRK00768.1"/>
    <property type="match status" value="1"/>
</dbReference>
<dbReference type="PANTHER" id="PTHR23090">
    <property type="entry name" value="NH 3 /GLUTAMINE-DEPENDENT NAD + SYNTHETASE"/>
    <property type="match status" value="1"/>
</dbReference>
<dbReference type="PANTHER" id="PTHR23090:SF7">
    <property type="entry name" value="NH(3)-DEPENDENT NAD(+) SYNTHETASE"/>
    <property type="match status" value="1"/>
</dbReference>
<dbReference type="Pfam" id="PF02540">
    <property type="entry name" value="NAD_synthase"/>
    <property type="match status" value="1"/>
</dbReference>
<dbReference type="SUPFAM" id="SSF52402">
    <property type="entry name" value="Adenine nucleotide alpha hydrolases-like"/>
    <property type="match status" value="1"/>
</dbReference>
<sequence>MRAKQREIIDALKVKPTIDPATEIRRSVDFLKAYLQRYDFMKTLVLGISGGQDSTLTGLLCEQAVTELRQETGDNDYRFIAVRLPYGEQADEDDAMMAIDFMDADEVQRVNIKPATDAMIQAVETSGKPISDFNKGNVKARQRMIAQYAIAGARSGAVVGTDHAAEAVTGFYTKYGDGATDICPIWRLDKRQGAAMLAQLGAPEHLYKKVPTADLEDDRPALPDEAALGVRYEDIDDYLEGRSVSEAAASRIEDWYAKTAHKRHLPVNVYDTFWQE</sequence>
<gene>
    <name evidence="1" type="primary">nadE</name>
    <name type="ordered locus">LVIS_0544</name>
</gene>